<reference key="1">
    <citation type="submission" date="2004-11" db="EMBL/GenBank/DDBJ databases">
        <authorList>
            <consortium name="The German cDNA consortium"/>
        </authorList>
    </citation>
    <scope>NUCLEOTIDE SEQUENCE [LARGE SCALE MRNA]</scope>
    <source>
        <tissue>Kidney</tissue>
    </source>
</reference>
<gene>
    <name type="primary">RSRC2</name>
</gene>
<comment type="similarity">
    <text evidence="4">Belongs to the RSRC2 family.</text>
</comment>
<feature type="initiator methionine" description="Removed" evidence="1">
    <location>
        <position position="1"/>
    </location>
</feature>
<feature type="chain" id="PRO_0000314939" description="Arginine/serine-rich coiled-coil protein 2">
    <location>
        <begin position="2"/>
        <end position="435"/>
    </location>
</feature>
<feature type="region of interest" description="Disordered" evidence="3">
    <location>
        <begin position="1"/>
        <end position="230"/>
    </location>
</feature>
<feature type="coiled-coil region" evidence="2">
    <location>
        <begin position="230"/>
        <end position="270"/>
    </location>
</feature>
<feature type="compositionally biased region" description="Basic and acidic residues" evidence="3">
    <location>
        <begin position="1"/>
        <end position="27"/>
    </location>
</feature>
<feature type="compositionally biased region" description="Basic residues" evidence="3">
    <location>
        <begin position="35"/>
        <end position="51"/>
    </location>
</feature>
<feature type="compositionally biased region" description="Basic and acidic residues" evidence="3">
    <location>
        <begin position="66"/>
        <end position="111"/>
    </location>
</feature>
<feature type="compositionally biased region" description="Basic residues" evidence="3">
    <location>
        <begin position="112"/>
        <end position="214"/>
    </location>
</feature>
<feature type="modified residue" description="N-acetylalanine" evidence="1">
    <location>
        <position position="2"/>
    </location>
</feature>
<feature type="modified residue" description="Phosphoserine" evidence="1">
    <location>
        <position position="4"/>
    </location>
</feature>
<feature type="modified residue" description="Phosphothreonine" evidence="1">
    <location>
        <position position="6"/>
    </location>
</feature>
<feature type="modified residue" description="Phosphothreonine" evidence="1">
    <location>
        <position position="16"/>
    </location>
</feature>
<feature type="modified residue" description="Phosphoserine" evidence="1">
    <location>
        <position position="17"/>
    </location>
</feature>
<feature type="modified residue" description="Phosphoserine" evidence="1">
    <location>
        <position position="30"/>
    </location>
</feature>
<feature type="modified residue" description="Phosphoserine" evidence="1">
    <location>
        <position position="32"/>
    </location>
</feature>
<feature type="modified residue" description="Phosphoserine" evidence="1">
    <location>
        <position position="104"/>
    </location>
</feature>
<feature type="modified residue" description="Phosphoserine" evidence="1">
    <location>
        <position position="377"/>
    </location>
</feature>
<feature type="cross-link" description="Glycyl lysine isopeptide (Lys-Gly) (interchain with G-Cter in SUMO1); alternate" evidence="1">
    <location>
        <position position="376"/>
    </location>
</feature>
<feature type="cross-link" description="Glycyl lysine isopeptide (Lys-Gly) (interchain with G-Cter in SUMO2); alternate" evidence="1">
    <location>
        <position position="376"/>
    </location>
</feature>
<evidence type="ECO:0000250" key="1">
    <source>
        <dbReference type="UniProtKB" id="Q7L4I2"/>
    </source>
</evidence>
<evidence type="ECO:0000255" key="2"/>
<evidence type="ECO:0000256" key="3">
    <source>
        <dbReference type="SAM" id="MobiDB-lite"/>
    </source>
</evidence>
<evidence type="ECO:0000305" key="4"/>
<accession>Q5R8J6</accession>
<dbReference type="EMBL" id="CR859756">
    <property type="protein sequence ID" value="CAH91914.1"/>
    <property type="molecule type" value="mRNA"/>
</dbReference>
<dbReference type="RefSeq" id="NP_001126109.1">
    <property type="nucleotide sequence ID" value="NM_001132637.1"/>
</dbReference>
<dbReference type="SMR" id="Q5R8J6"/>
<dbReference type="FunCoup" id="Q5R8J6">
    <property type="interactions" value="2619"/>
</dbReference>
<dbReference type="STRING" id="9601.ENSPPYP00000005776"/>
<dbReference type="GeneID" id="100173064"/>
<dbReference type="KEGG" id="pon:100173064"/>
<dbReference type="CTD" id="65117"/>
<dbReference type="eggNOG" id="ENOG502QQ3C">
    <property type="taxonomic scope" value="Eukaryota"/>
</dbReference>
<dbReference type="InParanoid" id="Q5R8J6"/>
<dbReference type="OrthoDB" id="1928974at2759"/>
<dbReference type="Proteomes" id="UP000001595">
    <property type="component" value="Unplaced"/>
</dbReference>
<dbReference type="InterPro" id="IPR028124">
    <property type="entry name" value="SMAP_dom"/>
</dbReference>
<dbReference type="PANTHER" id="PTHR22426">
    <property type="entry name" value="ARGININE_SERINE-RICH COILED-COIL PROTEIN 2"/>
    <property type="match status" value="1"/>
</dbReference>
<dbReference type="PANTHER" id="PTHR22426:SF2">
    <property type="entry name" value="ARGININE_SERINE-RICH COILED-COIL PROTEIN 2"/>
    <property type="match status" value="1"/>
</dbReference>
<dbReference type="Pfam" id="PF15477">
    <property type="entry name" value="SMAP"/>
    <property type="match status" value="1"/>
</dbReference>
<organism>
    <name type="scientific">Pongo abelii</name>
    <name type="common">Sumatran orangutan</name>
    <name type="synonym">Pongo pygmaeus abelii</name>
    <dbReference type="NCBI Taxonomy" id="9601"/>
    <lineage>
        <taxon>Eukaryota</taxon>
        <taxon>Metazoa</taxon>
        <taxon>Chordata</taxon>
        <taxon>Craniata</taxon>
        <taxon>Vertebrata</taxon>
        <taxon>Euteleostomi</taxon>
        <taxon>Mammalia</taxon>
        <taxon>Eutheria</taxon>
        <taxon>Euarchontoglires</taxon>
        <taxon>Primates</taxon>
        <taxon>Haplorrhini</taxon>
        <taxon>Catarrhini</taxon>
        <taxon>Hominidae</taxon>
        <taxon>Pongo</taxon>
    </lineage>
</organism>
<sequence length="435" mass="50688">MAASDTERDGLAPEKTSPDRDKKKEQSDVSVSPRASKHHYSRSRSRSRERKRKSDNEGRKHRSRSRSKEARRHESKDKSSKKHKSEEHNDKEHSSDKGRERLNSSENGEDRHKRKERKSSRGRSHSRSRSRERRHRSRSRERKKSRSRSRERKKSRSRSRERKKSRSRSRERKRRIRSRSRSRSRHRHRTRSRSRTRSRSRDRKKRIEKPRRFSRSLSRTPSPPPFRGRNTAMDAQEALARRLERAKKLQEQREKEMVEKQKQQEIAAAAATGGSVLNVAALLASGTQVTPQIAMAAQMAALQAKALAETGIAVPSYYNPAAVNPMKFAEQEKKKRKMLWQGKKEGDKSQSAEIWEKLNFGNKDQNVKFRKLMGIKSEDEAGCSSVDEESYKTLKQQEEVFRNLDAQYEMARSQTHTQRGMGLGFTSSMRGMDAV</sequence>
<proteinExistence type="evidence at transcript level"/>
<name>RSRC2_PONAB</name>
<keyword id="KW-0007">Acetylation</keyword>
<keyword id="KW-0175">Coiled coil</keyword>
<keyword id="KW-1017">Isopeptide bond</keyword>
<keyword id="KW-0597">Phosphoprotein</keyword>
<keyword id="KW-1185">Reference proteome</keyword>
<keyword id="KW-0832">Ubl conjugation</keyword>
<protein>
    <recommendedName>
        <fullName>Arginine/serine-rich coiled-coil protein 2</fullName>
    </recommendedName>
</protein>